<dbReference type="EMBL" id="AF152310">
    <property type="protein sequence ID" value="AAD43704.1"/>
    <property type="molecule type" value="mRNA"/>
</dbReference>
<dbReference type="EMBL" id="AF152480">
    <property type="protein sequence ID" value="AAD43741.1"/>
    <property type="molecule type" value="mRNA"/>
</dbReference>
<dbReference type="EMBL" id="AC005609">
    <property type="protein sequence ID" value="AAC34324.1"/>
    <property type="molecule type" value="Genomic_DNA"/>
</dbReference>
<dbReference type="EMBL" id="BC003126">
    <property type="protein sequence ID" value="AAH03126.1"/>
    <property type="molecule type" value="mRNA"/>
</dbReference>
<dbReference type="CCDS" id="CCDS54914.1">
    <molecule id="Q9Y5H9-1"/>
</dbReference>
<dbReference type="CCDS" id="CCDS64269.1">
    <molecule id="Q9Y5H9-3"/>
</dbReference>
<dbReference type="RefSeq" id="NP_061728.1">
    <molecule id="Q9Y5H9-1"/>
    <property type="nucleotide sequence ID" value="NM_018905.3"/>
</dbReference>
<dbReference type="RefSeq" id="NP_113683.1">
    <molecule id="Q9Y5H9-2"/>
    <property type="nucleotide sequence ID" value="NM_031495.2"/>
</dbReference>
<dbReference type="RefSeq" id="NP_113684.1">
    <molecule id="Q9Y5H9-3"/>
    <property type="nucleotide sequence ID" value="NM_031496.2"/>
</dbReference>
<dbReference type="SMR" id="Q9Y5H9"/>
<dbReference type="BioGRID" id="121086">
    <property type="interactions" value="13"/>
</dbReference>
<dbReference type="FunCoup" id="Q9Y5H9">
    <property type="interactions" value="20"/>
</dbReference>
<dbReference type="IntAct" id="Q9Y5H9">
    <property type="interactions" value="6"/>
</dbReference>
<dbReference type="STRING" id="9606.ENSP00000431748"/>
<dbReference type="GlyCosmos" id="Q9Y5H9">
    <property type="glycosylation" value="4 sites, No reported glycans"/>
</dbReference>
<dbReference type="GlyGen" id="Q9Y5H9">
    <property type="glycosylation" value="5 sites"/>
</dbReference>
<dbReference type="iPTMnet" id="Q9Y5H9"/>
<dbReference type="PhosphoSitePlus" id="Q9Y5H9"/>
<dbReference type="BioMuta" id="PCDHA2"/>
<dbReference type="DMDM" id="13878430"/>
<dbReference type="jPOST" id="Q9Y5H9"/>
<dbReference type="MassIVE" id="Q9Y5H9"/>
<dbReference type="PaxDb" id="9606-ENSP00000431748"/>
<dbReference type="PeptideAtlas" id="Q9Y5H9"/>
<dbReference type="Antibodypedia" id="27110">
    <property type="antibodies" value="117 antibodies from 20 providers"/>
</dbReference>
<dbReference type="DNASU" id="56146"/>
<dbReference type="Ensembl" id="ENST00000378132.2">
    <molecule id="Q9Y5H9-2"/>
    <property type="protein sequence ID" value="ENSP00000367372.1"/>
    <property type="gene ID" value="ENSG00000204969.7"/>
</dbReference>
<dbReference type="Ensembl" id="ENST00000520672.2">
    <molecule id="Q9Y5H9-3"/>
    <property type="protein sequence ID" value="ENSP00000430584.2"/>
    <property type="gene ID" value="ENSG00000204969.7"/>
</dbReference>
<dbReference type="Ensembl" id="ENST00000526136.2">
    <molecule id="Q9Y5H9-1"/>
    <property type="protein sequence ID" value="ENSP00000431748.1"/>
    <property type="gene ID" value="ENSG00000204969.7"/>
</dbReference>
<dbReference type="Ensembl" id="ENST00000708288.1">
    <molecule id="Q9Y5H9-2"/>
    <property type="protein sequence ID" value="ENSP00000517139.1"/>
    <property type="gene ID" value="ENSG00000291650.1"/>
</dbReference>
<dbReference type="Ensembl" id="ENST00000708289.1">
    <molecule id="Q9Y5H9-1"/>
    <property type="protein sequence ID" value="ENSP00000517140.1"/>
    <property type="gene ID" value="ENSG00000291650.1"/>
</dbReference>
<dbReference type="Ensembl" id="ENST00000708290.1">
    <molecule id="Q9Y5H9-3"/>
    <property type="protein sequence ID" value="ENSP00000517141.1"/>
    <property type="gene ID" value="ENSG00000291650.1"/>
</dbReference>
<dbReference type="GeneID" id="56146"/>
<dbReference type="KEGG" id="hsa:56146"/>
<dbReference type="MANE-Select" id="ENST00000526136.2">
    <property type="protein sequence ID" value="ENSP00000431748.1"/>
    <property type="RefSeq nucleotide sequence ID" value="NM_018905.3"/>
    <property type="RefSeq protein sequence ID" value="NP_061728.1"/>
</dbReference>
<dbReference type="UCSC" id="uc003lhc.2">
    <molecule id="Q9Y5H9-1"/>
    <property type="organism name" value="human"/>
</dbReference>
<dbReference type="AGR" id="HGNC:8668"/>
<dbReference type="CTD" id="56146"/>
<dbReference type="DisGeNET" id="56146"/>
<dbReference type="GeneCards" id="PCDHA2"/>
<dbReference type="HGNC" id="HGNC:8668">
    <property type="gene designation" value="PCDHA2"/>
</dbReference>
<dbReference type="HPA" id="ENSG00000204969">
    <property type="expression patterns" value="Tissue enhanced (brain, pituitary gland)"/>
</dbReference>
<dbReference type="MalaCards" id="PCDHA2"/>
<dbReference type="MIM" id="604966">
    <property type="type" value="gene"/>
</dbReference>
<dbReference type="MIM" id="606308">
    <property type="type" value="gene"/>
</dbReference>
<dbReference type="neXtProt" id="NX_Q9Y5H9"/>
<dbReference type="OpenTargets" id="ENSG00000204969"/>
<dbReference type="PharmGKB" id="PA33014"/>
<dbReference type="VEuPathDB" id="HostDB:ENSG00000204969"/>
<dbReference type="eggNOG" id="KOG3594">
    <property type="taxonomic scope" value="Eukaryota"/>
</dbReference>
<dbReference type="GeneTree" id="ENSGT00940000164747"/>
<dbReference type="HOGENOM" id="CLU_006480_3_0_1"/>
<dbReference type="InParanoid" id="Q9Y5H9"/>
<dbReference type="OMA" id="AKTIRFH"/>
<dbReference type="OrthoDB" id="6252479at2759"/>
<dbReference type="PAN-GO" id="Q9Y5H9">
    <property type="GO annotations" value="2 GO annotations based on evolutionary models"/>
</dbReference>
<dbReference type="PhylomeDB" id="Q9Y5H9"/>
<dbReference type="TreeFam" id="TF332299"/>
<dbReference type="PathwayCommons" id="Q9Y5H9"/>
<dbReference type="SignaLink" id="Q9Y5H9"/>
<dbReference type="SIGNOR" id="Q9Y5H9"/>
<dbReference type="BioGRID-ORCS" id="56146">
    <property type="hits" value="5 hits in 1099 CRISPR screens"/>
</dbReference>
<dbReference type="GeneWiki" id="PCDHA2"/>
<dbReference type="GenomeRNAi" id="56146"/>
<dbReference type="Pharos" id="Q9Y5H9">
    <property type="development level" value="Tdark"/>
</dbReference>
<dbReference type="PRO" id="PR:Q9Y5H9"/>
<dbReference type="Proteomes" id="UP000005640">
    <property type="component" value="Chromosome 5"/>
</dbReference>
<dbReference type="RNAct" id="Q9Y5H9">
    <property type="molecule type" value="protein"/>
</dbReference>
<dbReference type="Bgee" id="ENSG00000204969">
    <property type="expression patterns" value="Expressed in cortical plate and 64 other cell types or tissues"/>
</dbReference>
<dbReference type="GO" id="GO:0005783">
    <property type="term" value="C:endoplasmic reticulum"/>
    <property type="evidence" value="ECO:0007669"/>
    <property type="project" value="Ensembl"/>
</dbReference>
<dbReference type="GO" id="GO:0005634">
    <property type="term" value="C:nucleus"/>
    <property type="evidence" value="ECO:0007669"/>
    <property type="project" value="Ensembl"/>
</dbReference>
<dbReference type="GO" id="GO:0005886">
    <property type="term" value="C:plasma membrane"/>
    <property type="evidence" value="ECO:0000318"/>
    <property type="project" value="GO_Central"/>
</dbReference>
<dbReference type="GO" id="GO:0005509">
    <property type="term" value="F:calcium ion binding"/>
    <property type="evidence" value="ECO:0007669"/>
    <property type="project" value="InterPro"/>
</dbReference>
<dbReference type="GO" id="GO:0007155">
    <property type="term" value="P:cell adhesion"/>
    <property type="evidence" value="ECO:0000318"/>
    <property type="project" value="GO_Central"/>
</dbReference>
<dbReference type="GO" id="GO:0007156">
    <property type="term" value="P:homophilic cell adhesion via plasma membrane adhesion molecules"/>
    <property type="evidence" value="ECO:0007669"/>
    <property type="project" value="InterPro"/>
</dbReference>
<dbReference type="GO" id="GO:0007399">
    <property type="term" value="P:nervous system development"/>
    <property type="evidence" value="ECO:0000304"/>
    <property type="project" value="ProtInc"/>
</dbReference>
<dbReference type="CDD" id="cd11304">
    <property type="entry name" value="Cadherin_repeat"/>
    <property type="match status" value="6"/>
</dbReference>
<dbReference type="FunFam" id="2.60.40.60:FF:000001">
    <property type="entry name" value="Protocadherin alpha 2"/>
    <property type="match status" value="1"/>
</dbReference>
<dbReference type="FunFam" id="2.60.40.60:FF:000002">
    <property type="entry name" value="Protocadherin alpha 2"/>
    <property type="match status" value="1"/>
</dbReference>
<dbReference type="FunFam" id="2.60.40.60:FF:000003">
    <property type="entry name" value="Protocadherin alpha 2"/>
    <property type="match status" value="1"/>
</dbReference>
<dbReference type="FunFam" id="2.60.40.60:FF:000006">
    <property type="entry name" value="Protocadherin alpha 2"/>
    <property type="match status" value="1"/>
</dbReference>
<dbReference type="FunFam" id="2.60.40.60:FF:000007">
    <property type="entry name" value="Protocadherin alpha 2"/>
    <property type="match status" value="1"/>
</dbReference>
<dbReference type="FunFam" id="2.60.40.60:FF:000076">
    <property type="entry name" value="Protocadherin alpha 2"/>
    <property type="match status" value="1"/>
</dbReference>
<dbReference type="Gene3D" id="2.60.40.60">
    <property type="entry name" value="Cadherins"/>
    <property type="match status" value="6"/>
</dbReference>
<dbReference type="InterPro" id="IPR002126">
    <property type="entry name" value="Cadherin-like_dom"/>
</dbReference>
<dbReference type="InterPro" id="IPR015919">
    <property type="entry name" value="Cadherin-like_sf"/>
</dbReference>
<dbReference type="InterPro" id="IPR031904">
    <property type="entry name" value="Cadherin_CBD"/>
</dbReference>
<dbReference type="InterPro" id="IPR020894">
    <property type="entry name" value="Cadherin_CS"/>
</dbReference>
<dbReference type="InterPro" id="IPR013164">
    <property type="entry name" value="Cadherin_N"/>
</dbReference>
<dbReference type="InterPro" id="IPR050174">
    <property type="entry name" value="Protocadherin/Cadherin-CA"/>
</dbReference>
<dbReference type="PANTHER" id="PTHR24028">
    <property type="entry name" value="CADHERIN-87A"/>
    <property type="match status" value="1"/>
</dbReference>
<dbReference type="PANTHER" id="PTHR24028:SF60">
    <property type="entry name" value="PROTOCADHERIN ALPHA-2"/>
    <property type="match status" value="1"/>
</dbReference>
<dbReference type="Pfam" id="PF00028">
    <property type="entry name" value="Cadherin"/>
    <property type="match status" value="5"/>
</dbReference>
<dbReference type="Pfam" id="PF08266">
    <property type="entry name" value="Cadherin_2"/>
    <property type="match status" value="1"/>
</dbReference>
<dbReference type="Pfam" id="PF15974">
    <property type="entry name" value="Cadherin_tail"/>
    <property type="match status" value="1"/>
</dbReference>
<dbReference type="PRINTS" id="PR00205">
    <property type="entry name" value="CADHERIN"/>
</dbReference>
<dbReference type="SMART" id="SM00112">
    <property type="entry name" value="CA"/>
    <property type="match status" value="6"/>
</dbReference>
<dbReference type="SUPFAM" id="SSF49313">
    <property type="entry name" value="Cadherin-like"/>
    <property type="match status" value="6"/>
</dbReference>
<dbReference type="PROSITE" id="PS00232">
    <property type="entry name" value="CADHERIN_1"/>
    <property type="match status" value="5"/>
</dbReference>
<dbReference type="PROSITE" id="PS50268">
    <property type="entry name" value="CADHERIN_2"/>
    <property type="match status" value="6"/>
</dbReference>
<evidence type="ECO:0000250" key="1"/>
<evidence type="ECO:0000255" key="2"/>
<evidence type="ECO:0000255" key="3">
    <source>
        <dbReference type="PROSITE-ProRule" id="PRU00043"/>
    </source>
</evidence>
<evidence type="ECO:0000256" key="4">
    <source>
        <dbReference type="SAM" id="MobiDB-lite"/>
    </source>
</evidence>
<evidence type="ECO:0000269" key="5">
    <source>
    </source>
</evidence>
<evidence type="ECO:0000303" key="6">
    <source>
    </source>
</evidence>
<evidence type="ECO:0000303" key="7">
    <source>
    </source>
</evidence>
<reference key="1">
    <citation type="journal article" date="1999" name="Cell">
        <title>A striking organization of a large family of human neural cadherin-like cell adhesion genes.</title>
        <authorList>
            <person name="Wu Q."/>
            <person name="Maniatis T."/>
        </authorList>
    </citation>
    <scope>NUCLEOTIDE SEQUENCE [MRNA] (ISOFORMS 1 AND 2)</scope>
    <source>
        <tissue>Brain</tissue>
    </source>
</reference>
<reference key="2">
    <citation type="journal article" date="2004" name="Nature">
        <title>The DNA sequence and comparative analysis of human chromosome 5.</title>
        <authorList>
            <person name="Schmutz J."/>
            <person name="Martin J."/>
            <person name="Terry A."/>
            <person name="Couronne O."/>
            <person name="Grimwood J."/>
            <person name="Lowry S."/>
            <person name="Gordon L.A."/>
            <person name="Scott D."/>
            <person name="Xie G."/>
            <person name="Huang W."/>
            <person name="Hellsten U."/>
            <person name="Tran-Gyamfi M."/>
            <person name="She X."/>
            <person name="Prabhakar S."/>
            <person name="Aerts A."/>
            <person name="Altherr M."/>
            <person name="Bajorek E."/>
            <person name="Black S."/>
            <person name="Branscomb E."/>
            <person name="Caoile C."/>
            <person name="Challacombe J.F."/>
            <person name="Chan Y.M."/>
            <person name="Denys M."/>
            <person name="Detter J.C."/>
            <person name="Escobar J."/>
            <person name="Flowers D."/>
            <person name="Fotopulos D."/>
            <person name="Glavina T."/>
            <person name="Gomez M."/>
            <person name="Gonzales E."/>
            <person name="Goodstein D."/>
            <person name="Grigoriev I."/>
            <person name="Groza M."/>
            <person name="Hammon N."/>
            <person name="Hawkins T."/>
            <person name="Haydu L."/>
            <person name="Israni S."/>
            <person name="Jett J."/>
            <person name="Kadner K."/>
            <person name="Kimball H."/>
            <person name="Kobayashi A."/>
            <person name="Lopez F."/>
            <person name="Lou Y."/>
            <person name="Martinez D."/>
            <person name="Medina C."/>
            <person name="Morgan J."/>
            <person name="Nandkeshwar R."/>
            <person name="Noonan J.P."/>
            <person name="Pitluck S."/>
            <person name="Pollard M."/>
            <person name="Predki P."/>
            <person name="Priest J."/>
            <person name="Ramirez L."/>
            <person name="Retterer J."/>
            <person name="Rodriguez A."/>
            <person name="Rogers S."/>
            <person name="Salamov A."/>
            <person name="Salazar A."/>
            <person name="Thayer N."/>
            <person name="Tice H."/>
            <person name="Tsai M."/>
            <person name="Ustaszewska A."/>
            <person name="Vo N."/>
            <person name="Wheeler J."/>
            <person name="Wu K."/>
            <person name="Yang J."/>
            <person name="Dickson M."/>
            <person name="Cheng J.-F."/>
            <person name="Eichler E.E."/>
            <person name="Olsen A."/>
            <person name="Pennacchio L.A."/>
            <person name="Rokhsar D.S."/>
            <person name="Richardson P."/>
            <person name="Lucas S.M."/>
            <person name="Myers R.M."/>
            <person name="Rubin E.M."/>
        </authorList>
    </citation>
    <scope>NUCLEOTIDE SEQUENCE [LARGE SCALE GENOMIC DNA]</scope>
</reference>
<reference key="3">
    <citation type="journal article" date="2004" name="Genome Res.">
        <title>The status, quality, and expansion of the NIH full-length cDNA project: the Mammalian Gene Collection (MGC).</title>
        <authorList>
            <consortium name="The MGC Project Team"/>
        </authorList>
    </citation>
    <scope>NUCLEOTIDE SEQUENCE [LARGE SCALE MRNA] (ISOFORM 3)</scope>
    <source>
        <tissue>Brain</tissue>
    </source>
</reference>
<reference key="4">
    <citation type="journal article" date="2003" name="Nat. Biotechnol.">
        <title>Exploring proteomes and analyzing protein processing by mass spectrometric identification of sorted N-terminal peptides.</title>
        <authorList>
            <person name="Gevaert K."/>
            <person name="Goethals M."/>
            <person name="Martens L."/>
            <person name="Van Damme J."/>
            <person name="Staes A."/>
            <person name="Thomas G.R."/>
            <person name="Vandekerckhove J."/>
        </authorList>
    </citation>
    <scope>PROTEIN SEQUENCE OF 23-32</scope>
    <source>
        <tissue>Platelet</tissue>
    </source>
</reference>
<comment type="function">
    <text>Potential calcium-dependent cell-adhesion protein. May be involved in the establishment and maintenance of specific neuronal connections in the brain.</text>
</comment>
<comment type="interaction">
    <interactant intactId="EBI-1754151">
        <id>Q9Y5H9</id>
    </interactant>
    <interactant intactId="EBI-1038838">
        <id>Q13936</id>
        <label>CACNA1C</label>
    </interactant>
    <organismsDiffer>false</organismsDiffer>
    <experiments>2</experiments>
</comment>
<comment type="interaction">
    <interactant intactId="EBI-1754151">
        <id>Q9Y5H9</id>
    </interactant>
    <interactant intactId="EBI-11173743">
        <id>O60741</id>
        <label>HCN1</label>
    </interactant>
    <organismsDiffer>false</organismsDiffer>
    <experiments>3</experiments>
</comment>
<comment type="subcellular location">
    <subcellularLocation>
        <location evidence="1">Cell membrane</location>
        <topology evidence="1">Single-pass type I membrane protein</topology>
    </subcellularLocation>
</comment>
<comment type="alternative products">
    <event type="alternative splicing"/>
    <isoform>
        <id>Q9Y5H9-1</id>
        <name>1</name>
        <sequence type="displayed"/>
    </isoform>
    <isoform>
        <id>Q9Y5H9-2</id>
        <name>2</name>
        <sequence type="described" ref="VSP_000673 VSP_000674"/>
    </isoform>
    <isoform>
        <id>Q9Y5H9-3</id>
        <name>3</name>
        <sequence type="described" ref="VSP_008040 VSP_008041"/>
    </isoform>
</comment>
<organism>
    <name type="scientific">Homo sapiens</name>
    <name type="common">Human</name>
    <dbReference type="NCBI Taxonomy" id="9606"/>
    <lineage>
        <taxon>Eukaryota</taxon>
        <taxon>Metazoa</taxon>
        <taxon>Chordata</taxon>
        <taxon>Craniata</taxon>
        <taxon>Vertebrata</taxon>
        <taxon>Euteleostomi</taxon>
        <taxon>Mammalia</taxon>
        <taxon>Eutheria</taxon>
        <taxon>Euarchontoglires</taxon>
        <taxon>Primates</taxon>
        <taxon>Haplorrhini</taxon>
        <taxon>Catarrhini</taxon>
        <taxon>Hominidae</taxon>
        <taxon>Homo</taxon>
    </lineage>
</organism>
<protein>
    <recommendedName>
        <fullName>Protocadherin alpha-2</fullName>
        <shortName>PCDH-alpha-2</shortName>
    </recommendedName>
</protein>
<sequence>MASSIRRGRGAWTRLLSLLLLAAWEVGSGQLRYSVPEEAKHGTFVGRIAQDLGLELEELVPRLFRVASKRHGDLLEVNLQNGILFVNSRIDREELCGRSAECSIHVEVIVDRPLQVFHVEVEVKDINDNPPIFPMTVKTIRFPESRLLDSRFPLEGASDADIGVNALLSYKLSSSEFFFLDIQANDELSESLSLVLGKSLDREETAEVNLLLVATDGGKPELTGTVQILIKVLDVNDNEPTFAQSVYKVKLLENTANGTLVVKLNASDADEGPNSEIVYSLGSDVSSTIQTKFTIDPISGEIRTKGKLDYEEAKSYEIQVTATDKGTPSMSGHCKISLKLVDINDNTPEVSITSLSLPISENASLGTVIALITVSDRDSGTNGHVTCSLTPHVPFKLVSTFKNYYSLVLDSALDRESVSAYELVVTARDGGSPSLWATTSVSIEVADVNDNAPAFAQPEYTVFVKENNPPGCHIFTVSAWDADAQENALVSYSLVERRVGERALSSYVSVHAESGKVYALQPLDHEEVELLQFQVSARDAGVPPLGSNVTLQVFVLDENDNAPALLAPRAGTAAGAVSELVPWSVGAGHVVAKVRAVDADSGYNAWLSYELQLGTGSARIPFRVGLYTGEISTTRALDEADSPRHRLLVLVKDHGEPALTATATVLVSLVESGQAPKASSRAWVGAAGSEATLVDVNVYLIIAICAVSSLLVLTVLLYTALRCSVPPTEGARAPGKPTLVCSSAVGSWSYSQQRRQRVCSGEDPPKTDLMAFSPSLSQGPDSAEEKQLSESEYVGKPRQPNPDWRYSASLRAGMHSSVHLEEAGILRAGPGGPDQQWPTVSSATPEPEAGEVSPPVGAGVNSNSWTFKYGPGNPKQSGPGELPDKFIIPGSPAIISIRQEPTNSQIDKSDFITFGKKEETKKKKKKKKGNKTQEKKEKGNSTTDNSDQ</sequence>
<proteinExistence type="evidence at protein level"/>
<gene>
    <name type="primary">PCDHA2</name>
</gene>
<accession>Q9Y5H9</accession>
<accession>O75287</accession>
<accession>Q9BTV3</accession>
<feature type="signal peptide" evidence="5">
    <location>
        <begin position="1"/>
        <end position="22"/>
    </location>
</feature>
<feature type="chain" id="PRO_0000003886" description="Protocadherin alpha-2">
    <location>
        <begin position="23"/>
        <end position="948"/>
    </location>
</feature>
<feature type="topological domain" description="Extracellular" evidence="2">
    <location>
        <begin position="23"/>
        <end position="697"/>
    </location>
</feature>
<feature type="transmembrane region" description="Helical" evidence="2">
    <location>
        <begin position="698"/>
        <end position="718"/>
    </location>
</feature>
<feature type="topological domain" description="Cytoplasmic" evidence="2">
    <location>
        <begin position="719"/>
        <end position="948"/>
    </location>
</feature>
<feature type="domain" description="Cadherin 1" evidence="3">
    <location>
        <begin position="30"/>
        <end position="133"/>
    </location>
</feature>
<feature type="domain" description="Cadherin 2" evidence="3">
    <location>
        <begin position="157"/>
        <end position="242"/>
    </location>
</feature>
<feature type="domain" description="Cadherin 3" evidence="3">
    <location>
        <begin position="243"/>
        <end position="350"/>
    </location>
</feature>
<feature type="domain" description="Cadherin 4" evidence="3">
    <location>
        <begin position="351"/>
        <end position="455"/>
    </location>
</feature>
<feature type="domain" description="Cadherin 5" evidence="3">
    <location>
        <begin position="456"/>
        <end position="565"/>
    </location>
</feature>
<feature type="domain" description="Cadherin 6" evidence="3">
    <location>
        <begin position="588"/>
        <end position="678"/>
    </location>
</feature>
<feature type="repeat" description="PXXP 1">
    <location>
        <begin position="734"/>
        <end position="737"/>
    </location>
</feature>
<feature type="repeat" description="PXXP 2">
    <location>
        <begin position="797"/>
        <end position="800"/>
    </location>
</feature>
<feature type="repeat" description="PXXP 3">
    <location>
        <begin position="830"/>
        <end position="833"/>
    </location>
</feature>
<feature type="repeat" description="PXXP 4">
    <location>
        <begin position="871"/>
        <end position="874"/>
    </location>
</feature>
<feature type="repeat" description="PXXP 5">
    <location>
        <begin position="889"/>
        <end position="892"/>
    </location>
</feature>
<feature type="region of interest" description="5 X 4 AA repeats of P-X-X-P">
    <location>
        <begin position="734"/>
        <end position="892"/>
    </location>
</feature>
<feature type="region of interest" description="Disordered" evidence="4">
    <location>
        <begin position="754"/>
        <end position="801"/>
    </location>
</feature>
<feature type="region of interest" description="Disordered" evidence="4">
    <location>
        <begin position="829"/>
        <end position="854"/>
    </location>
</feature>
<feature type="region of interest" description="Disordered" evidence="4">
    <location>
        <begin position="868"/>
        <end position="948"/>
    </location>
</feature>
<feature type="compositionally biased region" description="Basic and acidic residues" evidence="4">
    <location>
        <begin position="783"/>
        <end position="795"/>
    </location>
</feature>
<feature type="compositionally biased region" description="Basic and acidic residues" evidence="4">
    <location>
        <begin position="907"/>
        <end position="921"/>
    </location>
</feature>
<feature type="glycosylation site" description="N-linked (GlcNAc...) asparagine" evidence="2">
    <location>
        <position position="257"/>
    </location>
</feature>
<feature type="glycosylation site" description="N-linked (GlcNAc...) asparagine" evidence="2">
    <location>
        <position position="265"/>
    </location>
</feature>
<feature type="glycosylation site" description="N-linked (GlcNAc...) asparagine" evidence="2">
    <location>
        <position position="362"/>
    </location>
</feature>
<feature type="glycosylation site" description="N-linked (GlcNAc...) asparagine" evidence="2">
    <location>
        <position position="548"/>
    </location>
</feature>
<feature type="splice variant" id="VSP_000673" description="In isoform 2." evidence="6">
    <original>PRQPNPDWRYSASLRAGMHSSVHLEEAG</original>
    <variation>VSLLLFLANSKIVLFKKFYMISTSYLDS</variation>
    <location>
        <begin position="797"/>
        <end position="824"/>
    </location>
</feature>
<feature type="splice variant" id="VSP_008040" description="In isoform 3." evidence="7">
    <original>PRQPNPDWRYSA</original>
    <variation>IWNFNLQIQLAS</variation>
    <location>
        <begin position="797"/>
        <end position="808"/>
    </location>
</feature>
<feature type="splice variant" id="VSP_008041" description="In isoform 3." evidence="7">
    <location>
        <begin position="809"/>
        <end position="948"/>
    </location>
</feature>
<feature type="splice variant" id="VSP_000674" description="In isoform 2." evidence="6">
    <location>
        <begin position="825"/>
        <end position="948"/>
    </location>
</feature>
<feature type="sequence variant" id="VAR_059179" description="In dbSNP:rs9686540.">
    <original>E</original>
    <variation>K</variation>
    <location>
        <position position="25"/>
    </location>
</feature>
<feature type="sequence variant" id="VAR_024389" description="In dbSNP:rs11167600.">
    <original>V</original>
    <variation>L</variation>
    <location>
        <position position="106"/>
    </location>
</feature>
<feature type="sequence variant" id="VAR_048523" description="In dbSNP:rs6858913.">
    <original>P</original>
    <variation>L</variation>
    <location>
        <position position="764"/>
    </location>
</feature>
<name>PCDA2_HUMAN</name>
<keyword id="KW-0025">Alternative splicing</keyword>
<keyword id="KW-0106">Calcium</keyword>
<keyword id="KW-0130">Cell adhesion</keyword>
<keyword id="KW-1003">Cell membrane</keyword>
<keyword id="KW-0903">Direct protein sequencing</keyword>
<keyword id="KW-0325">Glycoprotein</keyword>
<keyword id="KW-0472">Membrane</keyword>
<keyword id="KW-1267">Proteomics identification</keyword>
<keyword id="KW-1185">Reference proteome</keyword>
<keyword id="KW-0677">Repeat</keyword>
<keyword id="KW-0732">Signal</keyword>
<keyword id="KW-0812">Transmembrane</keyword>
<keyword id="KW-1133">Transmembrane helix</keyword>